<gene>
    <name evidence="1" type="primary">purH</name>
    <name type="ordered locus">H16_A0501</name>
</gene>
<reference key="1">
    <citation type="journal article" date="2006" name="Nat. Biotechnol.">
        <title>Genome sequence of the bioplastic-producing 'Knallgas' bacterium Ralstonia eutropha H16.</title>
        <authorList>
            <person name="Pohlmann A."/>
            <person name="Fricke W.F."/>
            <person name="Reinecke F."/>
            <person name="Kusian B."/>
            <person name="Liesegang H."/>
            <person name="Cramm R."/>
            <person name="Eitinger T."/>
            <person name="Ewering C."/>
            <person name="Poetter M."/>
            <person name="Schwartz E."/>
            <person name="Strittmatter A."/>
            <person name="Voss I."/>
            <person name="Gottschalk G."/>
            <person name="Steinbuechel A."/>
            <person name="Friedrich B."/>
            <person name="Bowien B."/>
        </authorList>
    </citation>
    <scope>NUCLEOTIDE SEQUENCE [LARGE SCALE GENOMIC DNA]</scope>
    <source>
        <strain>ATCC 17699 / DSM 428 / KCTC 22496 / NCIMB 10442 / H16 / Stanier 337</strain>
    </source>
</reference>
<feature type="chain" id="PRO_1000018944" description="Bifunctional purine biosynthesis protein PurH">
    <location>
        <begin position="1"/>
        <end position="524"/>
    </location>
</feature>
<feature type="domain" description="MGS-like" evidence="2">
    <location>
        <begin position="1"/>
        <end position="145"/>
    </location>
</feature>
<keyword id="KW-0378">Hydrolase</keyword>
<keyword id="KW-0511">Multifunctional enzyme</keyword>
<keyword id="KW-0658">Purine biosynthesis</keyword>
<keyword id="KW-1185">Reference proteome</keyword>
<keyword id="KW-0808">Transferase</keyword>
<comment type="catalytic activity">
    <reaction evidence="1">
        <text>(6R)-10-formyltetrahydrofolate + 5-amino-1-(5-phospho-beta-D-ribosyl)imidazole-4-carboxamide = 5-formamido-1-(5-phospho-D-ribosyl)imidazole-4-carboxamide + (6S)-5,6,7,8-tetrahydrofolate</text>
        <dbReference type="Rhea" id="RHEA:22192"/>
        <dbReference type="ChEBI" id="CHEBI:57453"/>
        <dbReference type="ChEBI" id="CHEBI:58467"/>
        <dbReference type="ChEBI" id="CHEBI:58475"/>
        <dbReference type="ChEBI" id="CHEBI:195366"/>
        <dbReference type="EC" id="2.1.2.3"/>
    </reaction>
</comment>
<comment type="catalytic activity">
    <reaction evidence="1">
        <text>IMP + H2O = 5-formamido-1-(5-phospho-D-ribosyl)imidazole-4-carboxamide</text>
        <dbReference type="Rhea" id="RHEA:18445"/>
        <dbReference type="ChEBI" id="CHEBI:15377"/>
        <dbReference type="ChEBI" id="CHEBI:58053"/>
        <dbReference type="ChEBI" id="CHEBI:58467"/>
        <dbReference type="EC" id="3.5.4.10"/>
    </reaction>
</comment>
<comment type="pathway">
    <text evidence="1">Purine metabolism; IMP biosynthesis via de novo pathway; 5-formamido-1-(5-phospho-D-ribosyl)imidazole-4-carboxamide from 5-amino-1-(5-phospho-D-ribosyl)imidazole-4-carboxamide (10-formyl THF route): step 1/1.</text>
</comment>
<comment type="pathway">
    <text evidence="1">Purine metabolism; IMP biosynthesis via de novo pathway; IMP from 5-formamido-1-(5-phospho-D-ribosyl)imidazole-4-carboxamide: step 1/1.</text>
</comment>
<comment type="domain">
    <text evidence="1">The IMP cyclohydrolase activity resides in the N-terminal region.</text>
</comment>
<comment type="similarity">
    <text evidence="1">Belongs to the PurH family.</text>
</comment>
<dbReference type="EC" id="2.1.2.3" evidence="1"/>
<dbReference type="EC" id="3.5.4.10" evidence="1"/>
<dbReference type="EMBL" id="AM260479">
    <property type="protein sequence ID" value="CAJ91651.1"/>
    <property type="molecule type" value="Genomic_DNA"/>
</dbReference>
<dbReference type="RefSeq" id="WP_010813888.1">
    <property type="nucleotide sequence ID" value="NZ_CP039287.1"/>
</dbReference>
<dbReference type="SMR" id="Q0KEC0"/>
<dbReference type="STRING" id="381666.H16_A0501"/>
<dbReference type="KEGG" id="reh:H16_A0501"/>
<dbReference type="eggNOG" id="COG0138">
    <property type="taxonomic scope" value="Bacteria"/>
</dbReference>
<dbReference type="HOGENOM" id="CLU_016316_5_2_4"/>
<dbReference type="OrthoDB" id="9802065at2"/>
<dbReference type="UniPathway" id="UPA00074">
    <property type="reaction ID" value="UER00133"/>
</dbReference>
<dbReference type="UniPathway" id="UPA00074">
    <property type="reaction ID" value="UER00135"/>
</dbReference>
<dbReference type="Proteomes" id="UP000008210">
    <property type="component" value="Chromosome 1"/>
</dbReference>
<dbReference type="GO" id="GO:0005829">
    <property type="term" value="C:cytosol"/>
    <property type="evidence" value="ECO:0007669"/>
    <property type="project" value="TreeGrafter"/>
</dbReference>
<dbReference type="GO" id="GO:0003937">
    <property type="term" value="F:IMP cyclohydrolase activity"/>
    <property type="evidence" value="ECO:0007669"/>
    <property type="project" value="UniProtKB-UniRule"/>
</dbReference>
<dbReference type="GO" id="GO:0004643">
    <property type="term" value="F:phosphoribosylaminoimidazolecarboxamide formyltransferase activity"/>
    <property type="evidence" value="ECO:0007669"/>
    <property type="project" value="UniProtKB-UniRule"/>
</dbReference>
<dbReference type="GO" id="GO:0006189">
    <property type="term" value="P:'de novo' IMP biosynthetic process"/>
    <property type="evidence" value="ECO:0007669"/>
    <property type="project" value="UniProtKB-UniRule"/>
</dbReference>
<dbReference type="CDD" id="cd01421">
    <property type="entry name" value="IMPCH"/>
    <property type="match status" value="1"/>
</dbReference>
<dbReference type="FunFam" id="3.40.140.20:FF:000001">
    <property type="entry name" value="Bifunctional purine biosynthesis protein PurH"/>
    <property type="match status" value="1"/>
</dbReference>
<dbReference type="FunFam" id="3.40.140.20:FF:000002">
    <property type="entry name" value="Bifunctional purine biosynthesis protein PurH"/>
    <property type="match status" value="1"/>
</dbReference>
<dbReference type="FunFam" id="3.40.50.1380:FF:000001">
    <property type="entry name" value="Bifunctional purine biosynthesis protein PurH"/>
    <property type="match status" value="1"/>
</dbReference>
<dbReference type="Gene3D" id="3.40.140.20">
    <property type="match status" value="2"/>
</dbReference>
<dbReference type="Gene3D" id="3.40.50.1380">
    <property type="entry name" value="Methylglyoxal synthase-like domain"/>
    <property type="match status" value="1"/>
</dbReference>
<dbReference type="HAMAP" id="MF_00139">
    <property type="entry name" value="PurH"/>
    <property type="match status" value="1"/>
</dbReference>
<dbReference type="InterPro" id="IPR024051">
    <property type="entry name" value="AICAR_Tfase_dup_dom_sf"/>
</dbReference>
<dbReference type="InterPro" id="IPR016193">
    <property type="entry name" value="Cytidine_deaminase-like"/>
</dbReference>
<dbReference type="InterPro" id="IPR011607">
    <property type="entry name" value="MGS-like_dom"/>
</dbReference>
<dbReference type="InterPro" id="IPR036914">
    <property type="entry name" value="MGS-like_dom_sf"/>
</dbReference>
<dbReference type="InterPro" id="IPR002695">
    <property type="entry name" value="PurH-like"/>
</dbReference>
<dbReference type="NCBIfam" id="NF002049">
    <property type="entry name" value="PRK00881.1"/>
    <property type="match status" value="1"/>
</dbReference>
<dbReference type="NCBIfam" id="TIGR00355">
    <property type="entry name" value="purH"/>
    <property type="match status" value="1"/>
</dbReference>
<dbReference type="PANTHER" id="PTHR11692:SF0">
    <property type="entry name" value="BIFUNCTIONAL PURINE BIOSYNTHESIS PROTEIN ATIC"/>
    <property type="match status" value="1"/>
</dbReference>
<dbReference type="PANTHER" id="PTHR11692">
    <property type="entry name" value="BIFUNCTIONAL PURINE BIOSYNTHESIS PROTEIN PURH"/>
    <property type="match status" value="1"/>
</dbReference>
<dbReference type="Pfam" id="PF01808">
    <property type="entry name" value="AICARFT_IMPCHas"/>
    <property type="match status" value="1"/>
</dbReference>
<dbReference type="Pfam" id="PF02142">
    <property type="entry name" value="MGS"/>
    <property type="match status" value="1"/>
</dbReference>
<dbReference type="PIRSF" id="PIRSF000414">
    <property type="entry name" value="AICARFT_IMPCHas"/>
    <property type="match status" value="1"/>
</dbReference>
<dbReference type="SMART" id="SM00798">
    <property type="entry name" value="AICARFT_IMPCHas"/>
    <property type="match status" value="1"/>
</dbReference>
<dbReference type="SMART" id="SM00851">
    <property type="entry name" value="MGS"/>
    <property type="match status" value="1"/>
</dbReference>
<dbReference type="SUPFAM" id="SSF53927">
    <property type="entry name" value="Cytidine deaminase-like"/>
    <property type="match status" value="1"/>
</dbReference>
<dbReference type="SUPFAM" id="SSF52335">
    <property type="entry name" value="Methylglyoxal synthase-like"/>
    <property type="match status" value="1"/>
</dbReference>
<dbReference type="PROSITE" id="PS51855">
    <property type="entry name" value="MGS"/>
    <property type="match status" value="1"/>
</dbReference>
<organism>
    <name type="scientific">Cupriavidus necator (strain ATCC 17699 / DSM 428 / KCTC 22496 / NCIMB 10442 / H16 / Stanier 337)</name>
    <name type="common">Ralstonia eutropha</name>
    <dbReference type="NCBI Taxonomy" id="381666"/>
    <lineage>
        <taxon>Bacteria</taxon>
        <taxon>Pseudomonadati</taxon>
        <taxon>Pseudomonadota</taxon>
        <taxon>Betaproteobacteria</taxon>
        <taxon>Burkholderiales</taxon>
        <taxon>Burkholderiaceae</taxon>
        <taxon>Cupriavidus</taxon>
    </lineage>
</organism>
<sequence>MIKQALLSVSDKTGIVDFARELNALGVTLLSTGGTAKLLADSGLPVTEVADYTGFPEMLDGRVKTLHPKVHGGILARRDLPEHMAALAEHDIPTIDLLVVNLYPFQQTVAKDDCTLPDAIENIDIGGPTMLRSAAKNHRDVTVIVDPADYAVVLDEMRANANSVGYDTNFRLATKVFAHTAQYDGAITNYLTSLGADKSHQGRSAYPQTLNLAFDKVQEMRYGENPHQSAAFYRDLRAVDGALANYVQLQGKELSYNNIADADAAWECVKSFDAASGAACVIIKHANPCGVALGANALEAYDKAFKTDSTSAFGGIIAFNVELDETAAQAVARQFVEVLIAPSFSAGARAVFAAKQNVRLLEIPLGQGINQYDFKRVGGGLLVQSPDARNVQPSELRVVTRRHPNPKEMDDLMFAWRVAKFVKSNAIVFCGGGMTLGVGAGQMSRVDSARIASIKAQNAGLTLAGSAVASDAFFPFRDGLDVVVDAGATCVIQPGGSMRDDEVIAAADERGIAMVVTGTRHFRH</sequence>
<proteinExistence type="inferred from homology"/>
<accession>Q0KEC0</accession>
<name>PUR9_CUPNH</name>
<evidence type="ECO:0000255" key="1">
    <source>
        <dbReference type="HAMAP-Rule" id="MF_00139"/>
    </source>
</evidence>
<evidence type="ECO:0000255" key="2">
    <source>
        <dbReference type="PROSITE-ProRule" id="PRU01202"/>
    </source>
</evidence>
<protein>
    <recommendedName>
        <fullName evidence="1">Bifunctional purine biosynthesis protein PurH</fullName>
    </recommendedName>
    <domain>
        <recommendedName>
            <fullName evidence="1">Phosphoribosylaminoimidazolecarboxamide formyltransferase</fullName>
            <ecNumber evidence="1">2.1.2.3</ecNumber>
        </recommendedName>
        <alternativeName>
            <fullName evidence="1">AICAR transformylase</fullName>
        </alternativeName>
    </domain>
    <domain>
        <recommendedName>
            <fullName evidence="1">IMP cyclohydrolase</fullName>
            <ecNumber evidence="1">3.5.4.10</ecNumber>
        </recommendedName>
        <alternativeName>
            <fullName evidence="1">ATIC</fullName>
        </alternativeName>
        <alternativeName>
            <fullName evidence="1">IMP synthase</fullName>
        </alternativeName>
        <alternativeName>
            <fullName evidence="1">Inosinicase</fullName>
        </alternativeName>
    </domain>
</protein>